<dbReference type="EC" id="2.7.7.8" evidence="1"/>
<dbReference type="EMBL" id="CP000926">
    <property type="protein sequence ID" value="ABZ00594.1"/>
    <property type="molecule type" value="Genomic_DNA"/>
</dbReference>
<dbReference type="RefSeq" id="WP_012274239.1">
    <property type="nucleotide sequence ID" value="NC_010322.1"/>
</dbReference>
<dbReference type="SMR" id="B0KHX3"/>
<dbReference type="KEGG" id="ppg:PputGB1_4707"/>
<dbReference type="eggNOG" id="COG1185">
    <property type="taxonomic scope" value="Bacteria"/>
</dbReference>
<dbReference type="HOGENOM" id="CLU_004217_2_2_6"/>
<dbReference type="Proteomes" id="UP000002157">
    <property type="component" value="Chromosome"/>
</dbReference>
<dbReference type="GO" id="GO:0005829">
    <property type="term" value="C:cytosol"/>
    <property type="evidence" value="ECO:0007669"/>
    <property type="project" value="TreeGrafter"/>
</dbReference>
<dbReference type="GO" id="GO:0000175">
    <property type="term" value="F:3'-5'-RNA exonuclease activity"/>
    <property type="evidence" value="ECO:0007669"/>
    <property type="project" value="TreeGrafter"/>
</dbReference>
<dbReference type="GO" id="GO:0000287">
    <property type="term" value="F:magnesium ion binding"/>
    <property type="evidence" value="ECO:0007669"/>
    <property type="project" value="UniProtKB-UniRule"/>
</dbReference>
<dbReference type="GO" id="GO:0004654">
    <property type="term" value="F:polyribonucleotide nucleotidyltransferase activity"/>
    <property type="evidence" value="ECO:0007669"/>
    <property type="project" value="UniProtKB-UniRule"/>
</dbReference>
<dbReference type="GO" id="GO:0003723">
    <property type="term" value="F:RNA binding"/>
    <property type="evidence" value="ECO:0007669"/>
    <property type="project" value="UniProtKB-UniRule"/>
</dbReference>
<dbReference type="GO" id="GO:0006402">
    <property type="term" value="P:mRNA catabolic process"/>
    <property type="evidence" value="ECO:0007669"/>
    <property type="project" value="UniProtKB-UniRule"/>
</dbReference>
<dbReference type="GO" id="GO:0006396">
    <property type="term" value="P:RNA processing"/>
    <property type="evidence" value="ECO:0007669"/>
    <property type="project" value="InterPro"/>
</dbReference>
<dbReference type="CDD" id="cd02393">
    <property type="entry name" value="KH-I_PNPase"/>
    <property type="match status" value="1"/>
</dbReference>
<dbReference type="CDD" id="cd11363">
    <property type="entry name" value="RNase_PH_PNPase_1"/>
    <property type="match status" value="1"/>
</dbReference>
<dbReference type="CDD" id="cd11364">
    <property type="entry name" value="RNase_PH_PNPase_2"/>
    <property type="match status" value="1"/>
</dbReference>
<dbReference type="CDD" id="cd04472">
    <property type="entry name" value="S1_PNPase"/>
    <property type="match status" value="1"/>
</dbReference>
<dbReference type="FunFam" id="2.40.50.140:FF:000023">
    <property type="entry name" value="Polyribonucleotide nucleotidyltransferase"/>
    <property type="match status" value="1"/>
</dbReference>
<dbReference type="FunFam" id="3.30.1370.10:FF:000001">
    <property type="entry name" value="Polyribonucleotide nucleotidyltransferase"/>
    <property type="match status" value="1"/>
</dbReference>
<dbReference type="FunFam" id="3.30.230.70:FF:000001">
    <property type="entry name" value="Polyribonucleotide nucleotidyltransferase"/>
    <property type="match status" value="1"/>
</dbReference>
<dbReference type="FunFam" id="3.30.230.70:FF:000002">
    <property type="entry name" value="Polyribonucleotide nucleotidyltransferase"/>
    <property type="match status" value="1"/>
</dbReference>
<dbReference type="Gene3D" id="3.30.230.70">
    <property type="entry name" value="GHMP Kinase, N-terminal domain"/>
    <property type="match status" value="2"/>
</dbReference>
<dbReference type="Gene3D" id="3.30.1370.10">
    <property type="entry name" value="K Homology domain, type 1"/>
    <property type="match status" value="1"/>
</dbReference>
<dbReference type="Gene3D" id="2.40.50.140">
    <property type="entry name" value="Nucleic acid-binding proteins"/>
    <property type="match status" value="1"/>
</dbReference>
<dbReference type="HAMAP" id="MF_01595">
    <property type="entry name" value="PNPase"/>
    <property type="match status" value="1"/>
</dbReference>
<dbReference type="InterPro" id="IPR001247">
    <property type="entry name" value="ExoRNase_PH_dom1"/>
</dbReference>
<dbReference type="InterPro" id="IPR015847">
    <property type="entry name" value="ExoRNase_PH_dom2"/>
</dbReference>
<dbReference type="InterPro" id="IPR036345">
    <property type="entry name" value="ExoRNase_PH_dom2_sf"/>
</dbReference>
<dbReference type="InterPro" id="IPR004087">
    <property type="entry name" value="KH_dom"/>
</dbReference>
<dbReference type="InterPro" id="IPR004088">
    <property type="entry name" value="KH_dom_type_1"/>
</dbReference>
<dbReference type="InterPro" id="IPR036612">
    <property type="entry name" value="KH_dom_type_1_sf"/>
</dbReference>
<dbReference type="InterPro" id="IPR012340">
    <property type="entry name" value="NA-bd_OB-fold"/>
</dbReference>
<dbReference type="InterPro" id="IPR012162">
    <property type="entry name" value="PNPase"/>
</dbReference>
<dbReference type="InterPro" id="IPR027408">
    <property type="entry name" value="PNPase/RNase_PH_dom_sf"/>
</dbReference>
<dbReference type="InterPro" id="IPR015848">
    <property type="entry name" value="PNPase_PH_RNA-bd_bac/org-type"/>
</dbReference>
<dbReference type="InterPro" id="IPR020568">
    <property type="entry name" value="Ribosomal_Su5_D2-typ_SF"/>
</dbReference>
<dbReference type="InterPro" id="IPR003029">
    <property type="entry name" value="S1_domain"/>
</dbReference>
<dbReference type="NCBIfam" id="TIGR03591">
    <property type="entry name" value="polynuc_phos"/>
    <property type="match status" value="1"/>
</dbReference>
<dbReference type="NCBIfam" id="NF008805">
    <property type="entry name" value="PRK11824.1"/>
    <property type="match status" value="1"/>
</dbReference>
<dbReference type="PANTHER" id="PTHR11252">
    <property type="entry name" value="POLYRIBONUCLEOTIDE NUCLEOTIDYLTRANSFERASE"/>
    <property type="match status" value="1"/>
</dbReference>
<dbReference type="PANTHER" id="PTHR11252:SF0">
    <property type="entry name" value="POLYRIBONUCLEOTIDE NUCLEOTIDYLTRANSFERASE 1, MITOCHONDRIAL"/>
    <property type="match status" value="1"/>
</dbReference>
<dbReference type="Pfam" id="PF00013">
    <property type="entry name" value="KH_1"/>
    <property type="match status" value="1"/>
</dbReference>
<dbReference type="Pfam" id="PF03726">
    <property type="entry name" value="PNPase"/>
    <property type="match status" value="1"/>
</dbReference>
<dbReference type="Pfam" id="PF01138">
    <property type="entry name" value="RNase_PH"/>
    <property type="match status" value="2"/>
</dbReference>
<dbReference type="Pfam" id="PF03725">
    <property type="entry name" value="RNase_PH_C"/>
    <property type="match status" value="2"/>
</dbReference>
<dbReference type="Pfam" id="PF00575">
    <property type="entry name" value="S1"/>
    <property type="match status" value="1"/>
</dbReference>
<dbReference type="PIRSF" id="PIRSF005499">
    <property type="entry name" value="PNPase"/>
    <property type="match status" value="1"/>
</dbReference>
<dbReference type="SMART" id="SM00322">
    <property type="entry name" value="KH"/>
    <property type="match status" value="1"/>
</dbReference>
<dbReference type="SMART" id="SM00316">
    <property type="entry name" value="S1"/>
    <property type="match status" value="1"/>
</dbReference>
<dbReference type="SUPFAM" id="SSF54791">
    <property type="entry name" value="Eukaryotic type KH-domain (KH-domain type I)"/>
    <property type="match status" value="1"/>
</dbReference>
<dbReference type="SUPFAM" id="SSF50249">
    <property type="entry name" value="Nucleic acid-binding proteins"/>
    <property type="match status" value="1"/>
</dbReference>
<dbReference type="SUPFAM" id="SSF55666">
    <property type="entry name" value="Ribonuclease PH domain 2-like"/>
    <property type="match status" value="2"/>
</dbReference>
<dbReference type="SUPFAM" id="SSF54211">
    <property type="entry name" value="Ribosomal protein S5 domain 2-like"/>
    <property type="match status" value="2"/>
</dbReference>
<dbReference type="PROSITE" id="PS50084">
    <property type="entry name" value="KH_TYPE_1"/>
    <property type="match status" value="1"/>
</dbReference>
<dbReference type="PROSITE" id="PS50126">
    <property type="entry name" value="S1"/>
    <property type="match status" value="1"/>
</dbReference>
<name>PNP_PSEPG</name>
<feature type="chain" id="PRO_1000087996" description="Polyribonucleotide nucleotidyltransferase">
    <location>
        <begin position="1"/>
        <end position="701"/>
    </location>
</feature>
<feature type="domain" description="KH" evidence="1">
    <location>
        <begin position="554"/>
        <end position="613"/>
    </location>
</feature>
<feature type="domain" description="S1 motif" evidence="1">
    <location>
        <begin position="623"/>
        <end position="691"/>
    </location>
</feature>
<feature type="binding site" evidence="1">
    <location>
        <position position="487"/>
    </location>
    <ligand>
        <name>Mg(2+)</name>
        <dbReference type="ChEBI" id="CHEBI:18420"/>
    </ligand>
</feature>
<feature type="binding site" evidence="1">
    <location>
        <position position="493"/>
    </location>
    <ligand>
        <name>Mg(2+)</name>
        <dbReference type="ChEBI" id="CHEBI:18420"/>
    </ligand>
</feature>
<evidence type="ECO:0000255" key="1">
    <source>
        <dbReference type="HAMAP-Rule" id="MF_01595"/>
    </source>
</evidence>
<comment type="function">
    <text evidence="1">Involved in mRNA degradation. Catalyzes the phosphorolysis of single-stranded polyribonucleotides processively in the 3'- to 5'-direction.</text>
</comment>
<comment type="catalytic activity">
    <reaction evidence="1">
        <text>RNA(n+1) + phosphate = RNA(n) + a ribonucleoside 5'-diphosphate</text>
        <dbReference type="Rhea" id="RHEA:22096"/>
        <dbReference type="Rhea" id="RHEA-COMP:14527"/>
        <dbReference type="Rhea" id="RHEA-COMP:17342"/>
        <dbReference type="ChEBI" id="CHEBI:43474"/>
        <dbReference type="ChEBI" id="CHEBI:57930"/>
        <dbReference type="ChEBI" id="CHEBI:140395"/>
        <dbReference type="EC" id="2.7.7.8"/>
    </reaction>
</comment>
<comment type="cofactor">
    <cofactor evidence="1">
        <name>Mg(2+)</name>
        <dbReference type="ChEBI" id="CHEBI:18420"/>
    </cofactor>
</comment>
<comment type="subunit">
    <text evidence="1">Component of the RNA degradosome, which is a multiprotein complex involved in RNA processing and mRNA degradation.</text>
</comment>
<comment type="subcellular location">
    <subcellularLocation>
        <location evidence="1">Cytoplasm</location>
    </subcellularLocation>
</comment>
<comment type="similarity">
    <text evidence="1">Belongs to the polyribonucleotide nucleotidyltransferase family.</text>
</comment>
<reference key="1">
    <citation type="submission" date="2008-01" db="EMBL/GenBank/DDBJ databases">
        <title>Complete sequence of Pseudomonas putida GB-1.</title>
        <authorList>
            <consortium name="US DOE Joint Genome Institute"/>
            <person name="Copeland A."/>
            <person name="Lucas S."/>
            <person name="Lapidus A."/>
            <person name="Barry K."/>
            <person name="Glavina del Rio T."/>
            <person name="Dalin E."/>
            <person name="Tice H."/>
            <person name="Pitluck S."/>
            <person name="Bruce D."/>
            <person name="Goodwin L."/>
            <person name="Chertkov O."/>
            <person name="Brettin T."/>
            <person name="Detter J.C."/>
            <person name="Han C."/>
            <person name="Kuske C.R."/>
            <person name="Schmutz J."/>
            <person name="Larimer F."/>
            <person name="Land M."/>
            <person name="Hauser L."/>
            <person name="Kyrpides N."/>
            <person name="Kim E."/>
            <person name="McCarthy J.K."/>
            <person name="Richardson P."/>
        </authorList>
    </citation>
    <scope>NUCLEOTIDE SEQUENCE [LARGE SCALE GENOMIC DNA]</scope>
    <source>
        <strain>GB-1</strain>
    </source>
</reference>
<keyword id="KW-0963">Cytoplasm</keyword>
<keyword id="KW-0460">Magnesium</keyword>
<keyword id="KW-0479">Metal-binding</keyword>
<keyword id="KW-0548">Nucleotidyltransferase</keyword>
<keyword id="KW-0694">RNA-binding</keyword>
<keyword id="KW-0808">Transferase</keyword>
<protein>
    <recommendedName>
        <fullName evidence="1">Polyribonucleotide nucleotidyltransferase</fullName>
        <ecNumber evidence="1">2.7.7.8</ecNumber>
    </recommendedName>
    <alternativeName>
        <fullName evidence="1">Polynucleotide phosphorylase</fullName>
        <shortName evidence="1">PNPase</shortName>
    </alternativeName>
</protein>
<gene>
    <name evidence="1" type="primary">pnp</name>
    <name type="ordered locus">PputGB1_4707</name>
</gene>
<organism>
    <name type="scientific">Pseudomonas putida (strain GB-1)</name>
    <dbReference type="NCBI Taxonomy" id="76869"/>
    <lineage>
        <taxon>Bacteria</taxon>
        <taxon>Pseudomonadati</taxon>
        <taxon>Pseudomonadota</taxon>
        <taxon>Gammaproteobacteria</taxon>
        <taxon>Pseudomonadales</taxon>
        <taxon>Pseudomonadaceae</taxon>
        <taxon>Pseudomonas</taxon>
    </lineage>
</organism>
<proteinExistence type="inferred from homology"/>
<accession>B0KHX3</accession>
<sequence length="701" mass="75026">MNPVIKTFQFGQSTVTLETGRIARQATGAVLVTVDNDVTVLVTVVGAKQADPGKGFFPLSVHYQEKTYAAGKIPGGFFKREGRPSEKETLTSRLIDRPIRPLFPEGFMNEVQVVCTVVSTSKKTDPDIAAMIGTSAALAISGIPFEGPIGAARVAFHESTGYLLNPTYEQLAASSLDMVVAGTADAVLMVESEAQELTEDQMLGAVLFAHDEFQAVIQAVKELAAEAAKPTWDWKPAVANTELFNAIRAEFGEAVSQGYTITVKADRYARLGELRDQAIAKFSGEEGQPSASEVKEIFGEIEYRTVRENIVNGKPRIDGRDTKTVRPLNIEVGVLPKTHGSALFTRGETQALVVATLGTARDAQLLDTLEGEKKDPFMLHYNFPPFSVGECGRMGGAGRREIGHGRLARRSVQAMLPAADVFPYTIRVVSEITESNGSSSMASVCGASLALMDAGVPMKAPVAGIAMGLVKEGEKFAVLTDILGDEDHLGDMDFKVAGTAKGVTALQMDIKINGITEEIMEIALGQALEARLNILGQMNQIIGQSRTELSANAPTMIAMKIDTDKIRDVIGKGGATIRAICEETKASIDIEDDGSIKIFGETKEAAEAAKQRILGITAEAEIGKIYVGKVERIVDFGAFVNILPGKDGLVHISMLSDARVEKVTDILKEGQEVEVLVLDVDNRGRIKLSIKDVAAAKASGV</sequence>